<accession>Q0T006</accession>
<sequence length="206" mass="23469">MARYLGPKLKLSRREGTDLFLKSGVRAIDTKCKIEQAPGQHGARKPRLSDYGVQLREKQKVRRIYGVLERQFRNYYKEAARLKGNTGENLLALLEGRLDNVVYRMGFGATRAEARQLVSHKAIMVNGRVVNIASYQVSPNDVVSIREKAKKQSRVKAALELAEQREKPTWLEVDAGKMEGTFKRKPERSDLSADINEHLIVELYSK</sequence>
<evidence type="ECO:0000255" key="1">
    <source>
        <dbReference type="HAMAP-Rule" id="MF_01306"/>
    </source>
</evidence>
<evidence type="ECO:0000305" key="2"/>
<organism>
    <name type="scientific">Shigella flexneri serotype 5b (strain 8401)</name>
    <dbReference type="NCBI Taxonomy" id="373384"/>
    <lineage>
        <taxon>Bacteria</taxon>
        <taxon>Pseudomonadati</taxon>
        <taxon>Pseudomonadota</taxon>
        <taxon>Gammaproteobacteria</taxon>
        <taxon>Enterobacterales</taxon>
        <taxon>Enterobacteriaceae</taxon>
        <taxon>Shigella</taxon>
    </lineage>
</organism>
<feature type="chain" id="PRO_0000293370" description="Small ribosomal subunit protein uS4">
    <location>
        <begin position="1"/>
        <end position="206"/>
    </location>
</feature>
<feature type="domain" description="S4 RNA-binding" evidence="1">
    <location>
        <begin position="96"/>
        <end position="156"/>
    </location>
</feature>
<dbReference type="EMBL" id="CP000266">
    <property type="protein sequence ID" value="ABF05359.1"/>
    <property type="molecule type" value="Genomic_DNA"/>
</dbReference>
<dbReference type="RefSeq" id="WP_000135224.1">
    <property type="nucleotide sequence ID" value="NC_008258.1"/>
</dbReference>
<dbReference type="SMR" id="Q0T006"/>
<dbReference type="GeneID" id="93778691"/>
<dbReference type="KEGG" id="sfv:SFV_3316"/>
<dbReference type="HOGENOM" id="CLU_092403_0_2_6"/>
<dbReference type="Proteomes" id="UP000000659">
    <property type="component" value="Chromosome"/>
</dbReference>
<dbReference type="GO" id="GO:0015935">
    <property type="term" value="C:small ribosomal subunit"/>
    <property type="evidence" value="ECO:0007669"/>
    <property type="project" value="InterPro"/>
</dbReference>
<dbReference type="GO" id="GO:0019843">
    <property type="term" value="F:rRNA binding"/>
    <property type="evidence" value="ECO:0007669"/>
    <property type="project" value="UniProtKB-UniRule"/>
</dbReference>
<dbReference type="GO" id="GO:0003735">
    <property type="term" value="F:structural constituent of ribosome"/>
    <property type="evidence" value="ECO:0007669"/>
    <property type="project" value="InterPro"/>
</dbReference>
<dbReference type="GO" id="GO:0042274">
    <property type="term" value="P:ribosomal small subunit biogenesis"/>
    <property type="evidence" value="ECO:0007669"/>
    <property type="project" value="TreeGrafter"/>
</dbReference>
<dbReference type="GO" id="GO:0006412">
    <property type="term" value="P:translation"/>
    <property type="evidence" value="ECO:0007669"/>
    <property type="project" value="UniProtKB-UniRule"/>
</dbReference>
<dbReference type="CDD" id="cd00165">
    <property type="entry name" value="S4"/>
    <property type="match status" value="1"/>
</dbReference>
<dbReference type="FunFam" id="1.10.1050.10:FF:000001">
    <property type="entry name" value="30S ribosomal protein S4"/>
    <property type="match status" value="1"/>
</dbReference>
<dbReference type="FunFam" id="3.10.290.10:FF:000001">
    <property type="entry name" value="30S ribosomal protein S4"/>
    <property type="match status" value="1"/>
</dbReference>
<dbReference type="Gene3D" id="1.10.1050.10">
    <property type="entry name" value="Ribosomal Protein S4 Delta 41, Chain A, domain 1"/>
    <property type="match status" value="1"/>
</dbReference>
<dbReference type="Gene3D" id="3.10.290.10">
    <property type="entry name" value="RNA-binding S4 domain"/>
    <property type="match status" value="1"/>
</dbReference>
<dbReference type="HAMAP" id="MF_01306_B">
    <property type="entry name" value="Ribosomal_uS4_B"/>
    <property type="match status" value="1"/>
</dbReference>
<dbReference type="InterPro" id="IPR022801">
    <property type="entry name" value="Ribosomal_uS4"/>
</dbReference>
<dbReference type="InterPro" id="IPR005709">
    <property type="entry name" value="Ribosomal_uS4_bac-type"/>
</dbReference>
<dbReference type="InterPro" id="IPR018079">
    <property type="entry name" value="Ribosomal_uS4_CS"/>
</dbReference>
<dbReference type="InterPro" id="IPR001912">
    <property type="entry name" value="Ribosomal_uS4_N"/>
</dbReference>
<dbReference type="InterPro" id="IPR002942">
    <property type="entry name" value="S4_RNA-bd"/>
</dbReference>
<dbReference type="InterPro" id="IPR036986">
    <property type="entry name" value="S4_RNA-bd_sf"/>
</dbReference>
<dbReference type="NCBIfam" id="NF003717">
    <property type="entry name" value="PRK05327.1"/>
    <property type="match status" value="1"/>
</dbReference>
<dbReference type="NCBIfam" id="TIGR01017">
    <property type="entry name" value="rpsD_bact"/>
    <property type="match status" value="1"/>
</dbReference>
<dbReference type="PANTHER" id="PTHR11831">
    <property type="entry name" value="30S 40S RIBOSOMAL PROTEIN"/>
    <property type="match status" value="1"/>
</dbReference>
<dbReference type="PANTHER" id="PTHR11831:SF4">
    <property type="entry name" value="SMALL RIBOSOMAL SUBUNIT PROTEIN US4M"/>
    <property type="match status" value="1"/>
</dbReference>
<dbReference type="Pfam" id="PF00163">
    <property type="entry name" value="Ribosomal_S4"/>
    <property type="match status" value="1"/>
</dbReference>
<dbReference type="Pfam" id="PF01479">
    <property type="entry name" value="S4"/>
    <property type="match status" value="1"/>
</dbReference>
<dbReference type="SMART" id="SM01390">
    <property type="entry name" value="Ribosomal_S4"/>
    <property type="match status" value="1"/>
</dbReference>
<dbReference type="SMART" id="SM00363">
    <property type="entry name" value="S4"/>
    <property type="match status" value="1"/>
</dbReference>
<dbReference type="SUPFAM" id="SSF55174">
    <property type="entry name" value="Alpha-L RNA-binding motif"/>
    <property type="match status" value="1"/>
</dbReference>
<dbReference type="PROSITE" id="PS00632">
    <property type="entry name" value="RIBOSOMAL_S4"/>
    <property type="match status" value="1"/>
</dbReference>
<dbReference type="PROSITE" id="PS50889">
    <property type="entry name" value="S4"/>
    <property type="match status" value="1"/>
</dbReference>
<reference key="1">
    <citation type="journal article" date="2006" name="BMC Genomics">
        <title>Complete genome sequence of Shigella flexneri 5b and comparison with Shigella flexneri 2a.</title>
        <authorList>
            <person name="Nie H."/>
            <person name="Yang F."/>
            <person name="Zhang X."/>
            <person name="Yang J."/>
            <person name="Chen L."/>
            <person name="Wang J."/>
            <person name="Xiong Z."/>
            <person name="Peng J."/>
            <person name="Sun L."/>
            <person name="Dong J."/>
            <person name="Xue Y."/>
            <person name="Xu X."/>
            <person name="Chen S."/>
            <person name="Yao Z."/>
            <person name="Shen Y."/>
            <person name="Jin Q."/>
        </authorList>
    </citation>
    <scope>NUCLEOTIDE SEQUENCE [LARGE SCALE GENOMIC DNA]</scope>
    <source>
        <strain>8401</strain>
    </source>
</reference>
<keyword id="KW-0687">Ribonucleoprotein</keyword>
<keyword id="KW-0689">Ribosomal protein</keyword>
<keyword id="KW-0694">RNA-binding</keyword>
<keyword id="KW-0699">rRNA-binding</keyword>
<proteinExistence type="inferred from homology"/>
<name>RS4_SHIF8</name>
<comment type="function">
    <text evidence="1">One of the primary rRNA binding proteins, it binds directly to 16S rRNA where it nucleates assembly of the body of the 30S subunit.</text>
</comment>
<comment type="function">
    <text evidence="1">With S5 and S12 plays an important role in translational accuracy.</text>
</comment>
<comment type="subunit">
    <text evidence="1">Part of the 30S ribosomal subunit. Contacts protein S5. The interaction surface between S4 and S5 is involved in control of translational fidelity.</text>
</comment>
<comment type="similarity">
    <text evidence="1">Belongs to the universal ribosomal protein uS4 family.</text>
</comment>
<gene>
    <name evidence="1" type="primary">rpsD</name>
    <name type="ordered locus">SFV_3316</name>
</gene>
<protein>
    <recommendedName>
        <fullName evidence="1">Small ribosomal subunit protein uS4</fullName>
    </recommendedName>
    <alternativeName>
        <fullName evidence="2">30S ribosomal protein S4</fullName>
    </alternativeName>
</protein>